<comment type="function">
    <text evidence="2">DNA-dependent RNA polymerase catalyzes the transcription of DNA into RNA using the four ribonucleoside triphosphates as substrates. Component of RNA polymerase I which synthesizes ribosomal RNA precursors. A14 seems to play a role in the stability of Pol I subunit A43 and association of rrn3 to Pol I.</text>
</comment>
<comment type="subunit">
    <text evidence="2">Component of the RNA polymerase I (Pol I) complex consisting of 14 subunits. Part of a Pol I subcomplex consisting of the subunits A14 and A43. Interacts with rpa43.</text>
</comment>
<comment type="subcellular location">
    <subcellularLocation>
        <location evidence="2">Nucleus</location>
        <location evidence="2">Nucleolus</location>
    </subcellularLocation>
</comment>
<comment type="PTM">
    <text evidence="2">Phosphorylated.</text>
</comment>
<sequence>MATECPPKMILRKSEKLDKDASSKFLNRYIQTIERFQDEKSGSESVLSQLNRVLMYLKGEEIPLISLNLPVQGPPTEELIIPPEEMLETKEEESLKHAREENDDLHLDKETKKRLKKEKKKAARREKEEARKAKADTTQGVGEKEQS</sequence>
<gene>
    <name type="primary">ker1</name>
    <name type="ORF">SPBC1718.03</name>
</gene>
<organism>
    <name type="scientific">Schizosaccharomyces pombe (strain 972 / ATCC 24843)</name>
    <name type="common">Fission yeast</name>
    <dbReference type="NCBI Taxonomy" id="284812"/>
    <lineage>
        <taxon>Eukaryota</taxon>
        <taxon>Fungi</taxon>
        <taxon>Dikarya</taxon>
        <taxon>Ascomycota</taxon>
        <taxon>Taphrinomycotina</taxon>
        <taxon>Schizosaccharomycetes</taxon>
        <taxon>Schizosaccharomycetales</taxon>
        <taxon>Schizosaccharomycetaceae</taxon>
        <taxon>Schizosaccharomyces</taxon>
    </lineage>
</organism>
<dbReference type="EMBL" id="AB079137">
    <property type="protein sequence ID" value="BAB91320.1"/>
    <property type="molecule type" value="mRNA"/>
</dbReference>
<dbReference type="EMBL" id="CU329671">
    <property type="protein sequence ID" value="CAB75993.1"/>
    <property type="molecule type" value="Genomic_DNA"/>
</dbReference>
<dbReference type="PIR" id="T50331">
    <property type="entry name" value="T50331"/>
</dbReference>
<dbReference type="RefSeq" id="NP_596449.1">
    <property type="nucleotide sequence ID" value="NM_001022368.2"/>
</dbReference>
<dbReference type="PDB" id="7AOC">
    <property type="method" value="EM"/>
    <property type="resolution" value="3.84 A"/>
    <property type="chains" value="D=1-147"/>
</dbReference>
<dbReference type="PDB" id="7AOD">
    <property type="method" value="EM"/>
    <property type="resolution" value="4.50 A"/>
    <property type="chains" value="D/P=1-147"/>
</dbReference>
<dbReference type="PDB" id="7AOE">
    <property type="method" value="EM"/>
    <property type="resolution" value="3.90 A"/>
    <property type="chains" value="D=1-147"/>
</dbReference>
<dbReference type="PDBsum" id="7AOC"/>
<dbReference type="PDBsum" id="7AOD"/>
<dbReference type="PDBsum" id="7AOE"/>
<dbReference type="EMDB" id="EMD-11840"/>
<dbReference type="EMDB" id="EMD-11841"/>
<dbReference type="EMDB" id="EMD-11842"/>
<dbReference type="SMR" id="Q9P7P1"/>
<dbReference type="BioGRID" id="276230">
    <property type="interactions" value="9"/>
</dbReference>
<dbReference type="ComplexPortal" id="CPX-8907">
    <property type="entry name" value="DNA-directed RNA polymerase I complex"/>
</dbReference>
<dbReference type="STRING" id="284812.Q9P7P1"/>
<dbReference type="iPTMnet" id="Q9P7P1"/>
<dbReference type="PaxDb" id="4896-SPBC1718.03.1"/>
<dbReference type="EnsemblFungi" id="SPBC1718.03.1">
    <property type="protein sequence ID" value="SPBC1718.03.1:pep"/>
    <property type="gene ID" value="SPBC1718.03"/>
</dbReference>
<dbReference type="GeneID" id="2539675"/>
<dbReference type="KEGG" id="spo:2539675"/>
<dbReference type="PomBase" id="SPBC1718.03">
    <property type="gene designation" value="ker1"/>
</dbReference>
<dbReference type="VEuPathDB" id="FungiDB:SPBC1718.03"/>
<dbReference type="HOGENOM" id="CLU_1787937_0_0_1"/>
<dbReference type="InParanoid" id="Q9P7P1"/>
<dbReference type="OMA" id="HAREEND"/>
<dbReference type="PRO" id="PR:Q9P7P1"/>
<dbReference type="Proteomes" id="UP000002485">
    <property type="component" value="Chromosome II"/>
</dbReference>
<dbReference type="GO" id="GO:0005730">
    <property type="term" value="C:nucleolus"/>
    <property type="evidence" value="ECO:0000314"/>
    <property type="project" value="PomBase"/>
</dbReference>
<dbReference type="GO" id="GO:0005736">
    <property type="term" value="C:RNA polymerase I complex"/>
    <property type="evidence" value="ECO:0000314"/>
    <property type="project" value="PomBase"/>
</dbReference>
<dbReference type="GO" id="GO:0006360">
    <property type="term" value="P:transcription by RNA polymerase I"/>
    <property type="evidence" value="ECO:0000316"/>
    <property type="project" value="PomBase"/>
</dbReference>
<dbReference type="GO" id="GO:0006362">
    <property type="term" value="P:transcription elongation by RNA polymerase I"/>
    <property type="evidence" value="ECO:0000269"/>
    <property type="project" value="PomBase"/>
</dbReference>
<dbReference type="InterPro" id="IPR013239">
    <property type="entry name" value="RNA_polI_Rpa14"/>
</dbReference>
<dbReference type="Pfam" id="PF08203">
    <property type="entry name" value="RNA_polI_A14"/>
    <property type="match status" value="1"/>
</dbReference>
<protein>
    <recommendedName>
        <fullName>DNA-directed RNA polymerase I subunit rpa14</fullName>
        <shortName>RNA polymerase I subunit A14</shortName>
    </recommendedName>
    <alternativeName>
        <fullName>DNA-directed RNA polymerase I 17 kDa polypeptide</fullName>
    </alternativeName>
    <alternativeName>
        <fullName>Nucleolar protein ker1</fullName>
    </alternativeName>
</protein>
<feature type="chain" id="PRO_0000073961" description="DNA-directed RNA polymerase I subunit rpa14">
    <location>
        <begin position="1"/>
        <end position="147"/>
    </location>
</feature>
<feature type="region of interest" description="Disordered" evidence="1">
    <location>
        <begin position="71"/>
        <end position="147"/>
    </location>
</feature>
<feature type="compositionally biased region" description="Low complexity" evidence="1">
    <location>
        <begin position="74"/>
        <end position="84"/>
    </location>
</feature>
<feature type="compositionally biased region" description="Basic and acidic residues" evidence="1">
    <location>
        <begin position="87"/>
        <end position="111"/>
    </location>
</feature>
<feature type="compositionally biased region" description="Basic residues" evidence="1">
    <location>
        <begin position="112"/>
        <end position="124"/>
    </location>
</feature>
<feature type="compositionally biased region" description="Basic and acidic residues" evidence="1">
    <location>
        <begin position="125"/>
        <end position="135"/>
    </location>
</feature>
<reference key="1">
    <citation type="journal article" date="2005" name="J. Biol. Chem.">
        <title>The fission yeast protein Ker1p is an ortholog of RNA polymerase I subunit A14 in Saccharomyces cerevisiae and is required for stable association of Rrn3p and RPA21 in RNA polymerase I.</title>
        <authorList>
            <person name="Imazawa Y."/>
            <person name="Hisatake K."/>
            <person name="Mitsuzawa H."/>
            <person name="Matsumoto M."/>
            <person name="Tsukui T."/>
            <person name="Nakagawa K."/>
            <person name="Nakadai T."/>
            <person name="Shimada M."/>
            <person name="Ishihama A."/>
            <person name="Nogi Y."/>
        </authorList>
    </citation>
    <scope>NUCLEOTIDE SEQUENCE [MRNA]</scope>
    <scope>FUNCTION</scope>
    <scope>INTERACTION WITH RPA43</scope>
    <scope>IDENTIFICATION IN THE RNA POL I COMPLEX</scope>
    <scope>SUBCELLULAR LOCATION</scope>
    <scope>PHOSPHORYLATION</scope>
    <source>
        <strain>972 / ATCC 24843</strain>
    </source>
</reference>
<reference key="2">
    <citation type="journal article" date="2002" name="Nature">
        <title>The genome sequence of Schizosaccharomyces pombe.</title>
        <authorList>
            <person name="Wood V."/>
            <person name="Gwilliam R."/>
            <person name="Rajandream M.A."/>
            <person name="Lyne M.H."/>
            <person name="Lyne R."/>
            <person name="Stewart A."/>
            <person name="Sgouros J.G."/>
            <person name="Peat N."/>
            <person name="Hayles J."/>
            <person name="Baker S.G."/>
            <person name="Basham D."/>
            <person name="Bowman S."/>
            <person name="Brooks K."/>
            <person name="Brown D."/>
            <person name="Brown S."/>
            <person name="Chillingworth T."/>
            <person name="Churcher C.M."/>
            <person name="Collins M."/>
            <person name="Connor R."/>
            <person name="Cronin A."/>
            <person name="Davis P."/>
            <person name="Feltwell T."/>
            <person name="Fraser A."/>
            <person name="Gentles S."/>
            <person name="Goble A."/>
            <person name="Hamlin N."/>
            <person name="Harris D.E."/>
            <person name="Hidalgo J."/>
            <person name="Hodgson G."/>
            <person name="Holroyd S."/>
            <person name="Hornsby T."/>
            <person name="Howarth S."/>
            <person name="Huckle E.J."/>
            <person name="Hunt S."/>
            <person name="Jagels K."/>
            <person name="James K.D."/>
            <person name="Jones L."/>
            <person name="Jones M."/>
            <person name="Leather S."/>
            <person name="McDonald S."/>
            <person name="McLean J."/>
            <person name="Mooney P."/>
            <person name="Moule S."/>
            <person name="Mungall K.L."/>
            <person name="Murphy L.D."/>
            <person name="Niblett D."/>
            <person name="Odell C."/>
            <person name="Oliver K."/>
            <person name="O'Neil S."/>
            <person name="Pearson D."/>
            <person name="Quail M.A."/>
            <person name="Rabbinowitsch E."/>
            <person name="Rutherford K.M."/>
            <person name="Rutter S."/>
            <person name="Saunders D."/>
            <person name="Seeger K."/>
            <person name="Sharp S."/>
            <person name="Skelton J."/>
            <person name="Simmonds M.N."/>
            <person name="Squares R."/>
            <person name="Squares S."/>
            <person name="Stevens K."/>
            <person name="Taylor K."/>
            <person name="Taylor R.G."/>
            <person name="Tivey A."/>
            <person name="Walsh S.V."/>
            <person name="Warren T."/>
            <person name="Whitehead S."/>
            <person name="Woodward J.R."/>
            <person name="Volckaert G."/>
            <person name="Aert R."/>
            <person name="Robben J."/>
            <person name="Grymonprez B."/>
            <person name="Weltjens I."/>
            <person name="Vanstreels E."/>
            <person name="Rieger M."/>
            <person name="Schaefer M."/>
            <person name="Mueller-Auer S."/>
            <person name="Gabel C."/>
            <person name="Fuchs M."/>
            <person name="Duesterhoeft A."/>
            <person name="Fritzc C."/>
            <person name="Holzer E."/>
            <person name="Moestl D."/>
            <person name="Hilbert H."/>
            <person name="Borzym K."/>
            <person name="Langer I."/>
            <person name="Beck A."/>
            <person name="Lehrach H."/>
            <person name="Reinhardt R."/>
            <person name="Pohl T.M."/>
            <person name="Eger P."/>
            <person name="Zimmermann W."/>
            <person name="Wedler H."/>
            <person name="Wambutt R."/>
            <person name="Purnelle B."/>
            <person name="Goffeau A."/>
            <person name="Cadieu E."/>
            <person name="Dreano S."/>
            <person name="Gloux S."/>
            <person name="Lelaure V."/>
            <person name="Mottier S."/>
            <person name="Galibert F."/>
            <person name="Aves S.J."/>
            <person name="Xiang Z."/>
            <person name="Hunt C."/>
            <person name="Moore K."/>
            <person name="Hurst S.M."/>
            <person name="Lucas M."/>
            <person name="Rochet M."/>
            <person name="Gaillardin C."/>
            <person name="Tallada V.A."/>
            <person name="Garzon A."/>
            <person name="Thode G."/>
            <person name="Daga R.R."/>
            <person name="Cruzado L."/>
            <person name="Jimenez J."/>
            <person name="Sanchez M."/>
            <person name="del Rey F."/>
            <person name="Benito J."/>
            <person name="Dominguez A."/>
            <person name="Revuelta J.L."/>
            <person name="Moreno S."/>
            <person name="Armstrong J."/>
            <person name="Forsburg S.L."/>
            <person name="Cerutti L."/>
            <person name="Lowe T."/>
            <person name="McCombie W.R."/>
            <person name="Paulsen I."/>
            <person name="Potashkin J."/>
            <person name="Shpakovski G.V."/>
            <person name="Ussery D."/>
            <person name="Barrell B.G."/>
            <person name="Nurse P."/>
        </authorList>
    </citation>
    <scope>NUCLEOTIDE SEQUENCE [LARGE SCALE GENOMIC DNA]</scope>
    <source>
        <strain>972 / ATCC 24843</strain>
    </source>
</reference>
<proteinExistence type="evidence at protein level"/>
<evidence type="ECO:0000256" key="1">
    <source>
        <dbReference type="SAM" id="MobiDB-lite"/>
    </source>
</evidence>
<evidence type="ECO:0000269" key="2">
    <source>
    </source>
</evidence>
<accession>Q9P7P1</accession>
<name>RPA14_SCHPO</name>
<keyword id="KW-0002">3D-structure</keyword>
<keyword id="KW-0240">DNA-directed RNA polymerase</keyword>
<keyword id="KW-0539">Nucleus</keyword>
<keyword id="KW-0597">Phosphoprotein</keyword>
<keyword id="KW-1185">Reference proteome</keyword>
<keyword id="KW-0804">Transcription</keyword>